<dbReference type="EC" id="2.7.1.23" evidence="1"/>
<dbReference type="EMBL" id="CP000469">
    <property type="protein sequence ID" value="ABK49130.1"/>
    <property type="molecule type" value="Genomic_DNA"/>
</dbReference>
<dbReference type="SMR" id="A0KZB1"/>
<dbReference type="STRING" id="94122.Shewana3_2903"/>
<dbReference type="KEGG" id="shn:Shewana3_2903"/>
<dbReference type="eggNOG" id="COG0061">
    <property type="taxonomic scope" value="Bacteria"/>
</dbReference>
<dbReference type="HOGENOM" id="CLU_008831_0_1_6"/>
<dbReference type="Proteomes" id="UP000002589">
    <property type="component" value="Chromosome"/>
</dbReference>
<dbReference type="GO" id="GO:0005737">
    <property type="term" value="C:cytoplasm"/>
    <property type="evidence" value="ECO:0007669"/>
    <property type="project" value="UniProtKB-SubCell"/>
</dbReference>
<dbReference type="GO" id="GO:0005524">
    <property type="term" value="F:ATP binding"/>
    <property type="evidence" value="ECO:0007669"/>
    <property type="project" value="UniProtKB-KW"/>
</dbReference>
<dbReference type="GO" id="GO:0046872">
    <property type="term" value="F:metal ion binding"/>
    <property type="evidence" value="ECO:0007669"/>
    <property type="project" value="UniProtKB-UniRule"/>
</dbReference>
<dbReference type="GO" id="GO:0051287">
    <property type="term" value="F:NAD binding"/>
    <property type="evidence" value="ECO:0007669"/>
    <property type="project" value="UniProtKB-ARBA"/>
</dbReference>
<dbReference type="GO" id="GO:0003951">
    <property type="term" value="F:NAD+ kinase activity"/>
    <property type="evidence" value="ECO:0007669"/>
    <property type="project" value="UniProtKB-UniRule"/>
</dbReference>
<dbReference type="GO" id="GO:0019674">
    <property type="term" value="P:NAD metabolic process"/>
    <property type="evidence" value="ECO:0007669"/>
    <property type="project" value="InterPro"/>
</dbReference>
<dbReference type="GO" id="GO:0006741">
    <property type="term" value="P:NADP biosynthetic process"/>
    <property type="evidence" value="ECO:0007669"/>
    <property type="project" value="UniProtKB-UniRule"/>
</dbReference>
<dbReference type="FunFam" id="2.60.200.30:FF:000001">
    <property type="entry name" value="NAD kinase"/>
    <property type="match status" value="1"/>
</dbReference>
<dbReference type="Gene3D" id="3.40.50.10330">
    <property type="entry name" value="Probable inorganic polyphosphate/atp-NAD kinase, domain 1"/>
    <property type="match status" value="1"/>
</dbReference>
<dbReference type="Gene3D" id="2.60.200.30">
    <property type="entry name" value="Probable inorganic polyphosphate/atp-NAD kinase, domain 2"/>
    <property type="match status" value="1"/>
</dbReference>
<dbReference type="HAMAP" id="MF_00361">
    <property type="entry name" value="NAD_kinase"/>
    <property type="match status" value="1"/>
</dbReference>
<dbReference type="InterPro" id="IPR017438">
    <property type="entry name" value="ATP-NAD_kinase_N"/>
</dbReference>
<dbReference type="InterPro" id="IPR017437">
    <property type="entry name" value="ATP-NAD_kinase_PpnK-typ_C"/>
</dbReference>
<dbReference type="InterPro" id="IPR016064">
    <property type="entry name" value="NAD/diacylglycerol_kinase_sf"/>
</dbReference>
<dbReference type="InterPro" id="IPR002504">
    <property type="entry name" value="NADK"/>
</dbReference>
<dbReference type="NCBIfam" id="NF002306">
    <property type="entry name" value="PRK01231.1"/>
    <property type="match status" value="1"/>
</dbReference>
<dbReference type="NCBIfam" id="NF002893">
    <property type="entry name" value="PRK03378.1"/>
    <property type="match status" value="1"/>
</dbReference>
<dbReference type="PANTHER" id="PTHR20275">
    <property type="entry name" value="NAD KINASE"/>
    <property type="match status" value="1"/>
</dbReference>
<dbReference type="PANTHER" id="PTHR20275:SF0">
    <property type="entry name" value="NAD KINASE"/>
    <property type="match status" value="1"/>
</dbReference>
<dbReference type="Pfam" id="PF01513">
    <property type="entry name" value="NAD_kinase"/>
    <property type="match status" value="1"/>
</dbReference>
<dbReference type="Pfam" id="PF20143">
    <property type="entry name" value="NAD_kinase_C"/>
    <property type="match status" value="1"/>
</dbReference>
<dbReference type="SUPFAM" id="SSF111331">
    <property type="entry name" value="NAD kinase/diacylglycerol kinase-like"/>
    <property type="match status" value="1"/>
</dbReference>
<accession>A0KZB1</accession>
<protein>
    <recommendedName>
        <fullName evidence="1">NAD kinase</fullName>
        <ecNumber evidence="1">2.7.1.23</ecNumber>
    </recommendedName>
    <alternativeName>
        <fullName evidence="1">ATP-dependent NAD kinase</fullName>
    </alternativeName>
</protein>
<feature type="chain" id="PRO_1000079516" description="NAD kinase">
    <location>
        <begin position="1"/>
        <end position="309"/>
    </location>
</feature>
<feature type="active site" description="Proton acceptor" evidence="1">
    <location>
        <position position="89"/>
    </location>
</feature>
<feature type="binding site" evidence="1">
    <location>
        <begin position="89"/>
        <end position="90"/>
    </location>
    <ligand>
        <name>NAD(+)</name>
        <dbReference type="ChEBI" id="CHEBI:57540"/>
    </ligand>
</feature>
<feature type="binding site" evidence="1">
    <location>
        <begin position="163"/>
        <end position="164"/>
    </location>
    <ligand>
        <name>NAD(+)</name>
        <dbReference type="ChEBI" id="CHEBI:57540"/>
    </ligand>
</feature>
<feature type="binding site" evidence="1">
    <location>
        <position position="174"/>
    </location>
    <ligand>
        <name>NAD(+)</name>
        <dbReference type="ChEBI" id="CHEBI:57540"/>
    </ligand>
</feature>
<feature type="binding site" evidence="1">
    <location>
        <position position="191"/>
    </location>
    <ligand>
        <name>NAD(+)</name>
        <dbReference type="ChEBI" id="CHEBI:57540"/>
    </ligand>
</feature>
<feature type="binding site" evidence="1">
    <location>
        <position position="193"/>
    </location>
    <ligand>
        <name>NAD(+)</name>
        <dbReference type="ChEBI" id="CHEBI:57540"/>
    </ligand>
</feature>
<feature type="binding site" evidence="1">
    <location>
        <begin position="204"/>
        <end position="209"/>
    </location>
    <ligand>
        <name>NAD(+)</name>
        <dbReference type="ChEBI" id="CHEBI:57540"/>
    </ligand>
</feature>
<sequence>MGINFDVSRPKARSSINMTTKFHTIGLIGKPHHPGTNQTLKRLHHWLTVQGYEVLVEERVASELGTNIIAVDLLEIGARCDLAIVVGGDGNMLGAARVLARFDVGVIGVNRGNLGFLTDLPPDAFEEALAKVLDGEFDTEHRFLLEAEVYRHGMLKASNTAVNEAVLHPGKIAHMIEFEVYIDNQFMYSQRADGMIVSTPTGSTAYALSAGGAILTPNLQALILVPMFPHTLSCRPIVVDACSTIKMVVSPENGENLEVSCDGHVHLAVLPGDEIIVRRSSEQLRLIHPKGHNYFHVLRSKLGWGSKLF</sequence>
<proteinExistence type="inferred from homology"/>
<gene>
    <name evidence="1" type="primary">nadK</name>
    <name type="ordered locus">Shewana3_2903</name>
</gene>
<organism>
    <name type="scientific">Shewanella sp. (strain ANA-3)</name>
    <dbReference type="NCBI Taxonomy" id="94122"/>
    <lineage>
        <taxon>Bacteria</taxon>
        <taxon>Pseudomonadati</taxon>
        <taxon>Pseudomonadota</taxon>
        <taxon>Gammaproteobacteria</taxon>
        <taxon>Alteromonadales</taxon>
        <taxon>Shewanellaceae</taxon>
        <taxon>Shewanella</taxon>
    </lineage>
</organism>
<keyword id="KW-0067">ATP-binding</keyword>
<keyword id="KW-0963">Cytoplasm</keyword>
<keyword id="KW-0418">Kinase</keyword>
<keyword id="KW-0520">NAD</keyword>
<keyword id="KW-0521">NADP</keyword>
<keyword id="KW-0547">Nucleotide-binding</keyword>
<keyword id="KW-0808">Transferase</keyword>
<reference key="1">
    <citation type="submission" date="2006-09" db="EMBL/GenBank/DDBJ databases">
        <title>Complete sequence of chromosome 1 of Shewanella sp. ANA-3.</title>
        <authorList>
            <person name="Copeland A."/>
            <person name="Lucas S."/>
            <person name="Lapidus A."/>
            <person name="Barry K."/>
            <person name="Detter J.C."/>
            <person name="Glavina del Rio T."/>
            <person name="Hammon N."/>
            <person name="Israni S."/>
            <person name="Dalin E."/>
            <person name="Tice H."/>
            <person name="Pitluck S."/>
            <person name="Chertkov O."/>
            <person name="Brettin T."/>
            <person name="Bruce D."/>
            <person name="Han C."/>
            <person name="Tapia R."/>
            <person name="Gilna P."/>
            <person name="Schmutz J."/>
            <person name="Larimer F."/>
            <person name="Land M."/>
            <person name="Hauser L."/>
            <person name="Kyrpides N."/>
            <person name="Kim E."/>
            <person name="Newman D."/>
            <person name="Salticov C."/>
            <person name="Konstantinidis K."/>
            <person name="Klappenback J."/>
            <person name="Tiedje J."/>
            <person name="Richardson P."/>
        </authorList>
    </citation>
    <scope>NUCLEOTIDE SEQUENCE [LARGE SCALE GENOMIC DNA]</scope>
    <source>
        <strain>ANA-3</strain>
    </source>
</reference>
<comment type="function">
    <text evidence="1">Involved in the regulation of the intracellular balance of NAD and NADP, and is a key enzyme in the biosynthesis of NADP. Catalyzes specifically the phosphorylation on 2'-hydroxyl of the adenosine moiety of NAD to yield NADP.</text>
</comment>
<comment type="catalytic activity">
    <reaction evidence="1">
        <text>NAD(+) + ATP = ADP + NADP(+) + H(+)</text>
        <dbReference type="Rhea" id="RHEA:18629"/>
        <dbReference type="ChEBI" id="CHEBI:15378"/>
        <dbReference type="ChEBI" id="CHEBI:30616"/>
        <dbReference type="ChEBI" id="CHEBI:57540"/>
        <dbReference type="ChEBI" id="CHEBI:58349"/>
        <dbReference type="ChEBI" id="CHEBI:456216"/>
        <dbReference type="EC" id="2.7.1.23"/>
    </reaction>
</comment>
<comment type="cofactor">
    <cofactor evidence="1">
        <name>a divalent metal cation</name>
        <dbReference type="ChEBI" id="CHEBI:60240"/>
    </cofactor>
</comment>
<comment type="subcellular location">
    <subcellularLocation>
        <location evidence="1">Cytoplasm</location>
    </subcellularLocation>
</comment>
<comment type="similarity">
    <text evidence="1">Belongs to the NAD kinase family.</text>
</comment>
<name>NADK_SHESA</name>
<evidence type="ECO:0000255" key="1">
    <source>
        <dbReference type="HAMAP-Rule" id="MF_00361"/>
    </source>
</evidence>